<feature type="transit peptide" description="Chloroplast" evidence="1">
    <location>
        <begin position="1"/>
        <end position="37"/>
    </location>
</feature>
<feature type="chain" id="PRO_0000440980" description="Photosystem I assembly factor PSA3, chloroplastic">
    <location>
        <begin position="38"/>
        <end position="269"/>
    </location>
</feature>
<feature type="sequence conflict" description="In Ref. 2; ACG42565." evidence="4" ref="2">
    <original>S</original>
    <variation>N</variation>
    <location>
        <position position="9"/>
    </location>
</feature>
<feature type="sequence conflict" description="In Ref. 2; ACG42565." evidence="4" ref="2">
    <original>G</original>
    <variation>W</variation>
    <location>
        <position position="243"/>
    </location>
</feature>
<gene>
    <name evidence="3" type="primary">PSA3</name>
    <name evidence="5" type="ORF">ZEAMMB73_Zm00001d013295</name>
</gene>
<name>PSA3_MAIZE</name>
<dbReference type="EMBL" id="CM000781">
    <property type="protein sequence ID" value="AQK63041.1"/>
    <property type="molecule type" value="Genomic_DNA"/>
</dbReference>
<dbReference type="EMBL" id="EU970447">
    <property type="protein sequence ID" value="ACG42565.1"/>
    <property type="molecule type" value="mRNA"/>
</dbReference>
<dbReference type="EMBL" id="BT040049">
    <property type="protein sequence ID" value="ACF85054.1"/>
    <property type="molecule type" value="mRNA"/>
</dbReference>
<dbReference type="EMBL" id="BT040952">
    <property type="protein sequence ID" value="ACF85957.1"/>
    <property type="molecule type" value="mRNA"/>
</dbReference>
<dbReference type="EMBL" id="BT041533">
    <property type="protein sequence ID" value="ACF86538.1"/>
    <property type="molecule type" value="mRNA"/>
</dbReference>
<dbReference type="EMBL" id="BT043264">
    <property type="protein sequence ID" value="ACF88269.1"/>
    <property type="molecule type" value="mRNA"/>
</dbReference>
<dbReference type="EMBL" id="BT064225">
    <property type="protein sequence ID" value="ACN28922.1"/>
    <property type="molecule type" value="mRNA"/>
</dbReference>
<dbReference type="RefSeq" id="NP_001140958.1">
    <property type="nucleotide sequence ID" value="NM_001147486.1"/>
</dbReference>
<dbReference type="RefSeq" id="XP_008681409.1">
    <property type="nucleotide sequence ID" value="XM_008683187.1"/>
</dbReference>
<dbReference type="FunCoup" id="B4FSG1">
    <property type="interactions" value="2908"/>
</dbReference>
<dbReference type="STRING" id="4577.B4FSG1"/>
<dbReference type="PaxDb" id="4577-GRMZM2G051403_P01"/>
<dbReference type="EnsemblPlants" id="Zm00001eb215070_T002">
    <property type="protein sequence ID" value="Zm00001eb215070_P002"/>
    <property type="gene ID" value="Zm00001eb215070"/>
</dbReference>
<dbReference type="GeneID" id="100273037"/>
<dbReference type="Gramene" id="Zm00001eb215070_T002">
    <property type="protein sequence ID" value="Zm00001eb215070_P002"/>
    <property type="gene ID" value="Zm00001eb215070"/>
</dbReference>
<dbReference type="KEGG" id="zma:100273037"/>
<dbReference type="eggNOG" id="ENOG502QUQN">
    <property type="taxonomic scope" value="Eukaryota"/>
</dbReference>
<dbReference type="HOGENOM" id="CLU_078970_0_0_1"/>
<dbReference type="InParanoid" id="B4FSG1"/>
<dbReference type="OMA" id="ETFIAMM"/>
<dbReference type="OrthoDB" id="2013100at2759"/>
<dbReference type="Proteomes" id="UP000007305">
    <property type="component" value="Chromosome 5"/>
</dbReference>
<dbReference type="ExpressionAtlas" id="B4FSG1">
    <property type="expression patterns" value="baseline and differential"/>
</dbReference>
<dbReference type="GO" id="GO:0009535">
    <property type="term" value="C:chloroplast thylakoid membrane"/>
    <property type="evidence" value="ECO:0007669"/>
    <property type="project" value="UniProtKB-SubCell"/>
</dbReference>
<dbReference type="GO" id="GO:0098572">
    <property type="term" value="C:stromal side of plastid thylakoid membrane"/>
    <property type="evidence" value="ECO:0000314"/>
    <property type="project" value="UniProtKB"/>
</dbReference>
<dbReference type="GO" id="GO:0048564">
    <property type="term" value="P:photosystem I assembly"/>
    <property type="evidence" value="ECO:0000315"/>
    <property type="project" value="UniProtKB"/>
</dbReference>
<dbReference type="InterPro" id="IPR037736">
    <property type="entry name" value="PSA3"/>
</dbReference>
<dbReference type="PANTHER" id="PTHR36770">
    <property type="entry name" value="PHOTOSYSTEM I ASSEMBLY FACTOR PSA3, CHLOROPLASTIC"/>
    <property type="match status" value="1"/>
</dbReference>
<dbReference type="PANTHER" id="PTHR36770:SF1">
    <property type="entry name" value="PHOTOSYSTEM I ASSEMBLY FACTOR PSA3, CHLOROPLASTIC"/>
    <property type="match status" value="1"/>
</dbReference>
<comment type="function">
    <text evidence="2">Nuclear genome-encoded factor required for the accumulation of photosystem I (PSI). Functions as a PSI biogenesis factor. Cooperates with PYG7 to promote the stable assembly of PSI in the thylakoid membrane. May target primarily the PsaC subunit. Does not seem to be required for the expression of chloroplast genes encoding PSI subunits.</text>
</comment>
<comment type="subcellular location">
    <subcellularLocation>
        <location evidence="2">Plastid</location>
        <location evidence="2">Chloroplast thylakoid membrane</location>
        <topology evidence="2">Peripheral membrane protein</topology>
    </subcellularLocation>
    <text evidence="2">Associates with the stromal face of the thylakoid membrane.</text>
</comment>
<comment type="disruption phenotype">
    <text evidence="2">Pale green phenotype.</text>
</comment>
<proteinExistence type="evidence at transcript level"/>
<sequence length="269" mass="29884">MGALPVAHSLALTAAFLPCRRPAAHGRCRRRRYRAVVAYMEPNPNSPAAIAGRLVGALPIVGLVARILNDEGGVGGDIIDFAEFRRRVSKKCTVMDSKAFYDFNQRRGKPGDPFYVLLCCWLAAIGAGLLKTEEILEGVARLRISNDIEFEEETFIDMMRAAKEKRAKLKAPAPQIPMETRAEKALEAIYVCCFGQDMVEDEDEKLLRAILNAVFPSVGRAAVERMVASMAKQVASGERKRDGRTVSKEVQQRQLKDLEFLKQNKLESS</sequence>
<organism>
    <name type="scientific">Zea mays</name>
    <name type="common">Maize</name>
    <dbReference type="NCBI Taxonomy" id="4577"/>
    <lineage>
        <taxon>Eukaryota</taxon>
        <taxon>Viridiplantae</taxon>
        <taxon>Streptophyta</taxon>
        <taxon>Embryophyta</taxon>
        <taxon>Tracheophyta</taxon>
        <taxon>Spermatophyta</taxon>
        <taxon>Magnoliopsida</taxon>
        <taxon>Liliopsida</taxon>
        <taxon>Poales</taxon>
        <taxon>Poaceae</taxon>
        <taxon>PACMAD clade</taxon>
        <taxon>Panicoideae</taxon>
        <taxon>Andropogonodae</taxon>
        <taxon>Andropogoneae</taxon>
        <taxon>Tripsacinae</taxon>
        <taxon>Zea</taxon>
    </lineage>
</organism>
<protein>
    <recommendedName>
        <fullName evidence="4">Photosystem I assembly factor PSA3, chloroplastic</fullName>
    </recommendedName>
    <alternativeName>
        <fullName evidence="3">Protein PHOTOSYSTEM I ASSEMBLY 3</fullName>
    </alternativeName>
</protein>
<accession>B4FSG1</accession>
<accession>B6TZN2</accession>
<evidence type="ECO:0000255" key="1"/>
<evidence type="ECO:0000269" key="2">
    <source>
    </source>
</evidence>
<evidence type="ECO:0000303" key="3">
    <source>
    </source>
</evidence>
<evidence type="ECO:0000305" key="4"/>
<evidence type="ECO:0000312" key="5">
    <source>
        <dbReference type="EMBL" id="AQK63041.1"/>
    </source>
</evidence>
<reference key="1">
    <citation type="journal article" date="2009" name="Science">
        <title>The B73 maize genome: complexity, diversity, and dynamics.</title>
        <authorList>
            <person name="Schnable P.S."/>
            <person name="Ware D."/>
            <person name="Fulton R.S."/>
            <person name="Stein J.C."/>
            <person name="Wei F."/>
            <person name="Pasternak S."/>
            <person name="Liang C."/>
            <person name="Zhang J."/>
            <person name="Fulton L."/>
            <person name="Graves T.A."/>
            <person name="Minx P."/>
            <person name="Reily A.D."/>
            <person name="Courtney L."/>
            <person name="Kruchowski S.S."/>
            <person name="Tomlinson C."/>
            <person name="Strong C."/>
            <person name="Delehaunty K."/>
            <person name="Fronick C."/>
            <person name="Courtney B."/>
            <person name="Rock S.M."/>
            <person name="Belter E."/>
            <person name="Du F."/>
            <person name="Kim K."/>
            <person name="Abbott R.M."/>
            <person name="Cotton M."/>
            <person name="Levy A."/>
            <person name="Marchetto P."/>
            <person name="Ochoa K."/>
            <person name="Jackson S.M."/>
            <person name="Gillam B."/>
            <person name="Chen W."/>
            <person name="Yan L."/>
            <person name="Higginbotham J."/>
            <person name="Cardenas M."/>
            <person name="Waligorski J."/>
            <person name="Applebaum E."/>
            <person name="Phelps L."/>
            <person name="Falcone J."/>
            <person name="Kanchi K."/>
            <person name="Thane T."/>
            <person name="Scimone A."/>
            <person name="Thane N."/>
            <person name="Henke J."/>
            <person name="Wang T."/>
            <person name="Ruppert J."/>
            <person name="Shah N."/>
            <person name="Rotter K."/>
            <person name="Hodges J."/>
            <person name="Ingenthron E."/>
            <person name="Cordes M."/>
            <person name="Kohlberg S."/>
            <person name="Sgro J."/>
            <person name="Delgado B."/>
            <person name="Mead K."/>
            <person name="Chinwalla A."/>
            <person name="Leonard S."/>
            <person name="Crouse K."/>
            <person name="Collura K."/>
            <person name="Kudrna D."/>
            <person name="Currie J."/>
            <person name="He R."/>
            <person name="Angelova A."/>
            <person name="Rajasekar S."/>
            <person name="Mueller T."/>
            <person name="Lomeli R."/>
            <person name="Scara G."/>
            <person name="Ko A."/>
            <person name="Delaney K."/>
            <person name="Wissotski M."/>
            <person name="Lopez G."/>
            <person name="Campos D."/>
            <person name="Braidotti M."/>
            <person name="Ashley E."/>
            <person name="Golser W."/>
            <person name="Kim H."/>
            <person name="Lee S."/>
            <person name="Lin J."/>
            <person name="Dujmic Z."/>
            <person name="Kim W."/>
            <person name="Talag J."/>
            <person name="Zuccolo A."/>
            <person name="Fan C."/>
            <person name="Sebastian A."/>
            <person name="Kramer M."/>
            <person name="Spiegel L."/>
            <person name="Nascimento L."/>
            <person name="Zutavern T."/>
            <person name="Miller B."/>
            <person name="Ambroise C."/>
            <person name="Muller S."/>
            <person name="Spooner W."/>
            <person name="Narechania A."/>
            <person name="Ren L."/>
            <person name="Wei S."/>
            <person name="Kumari S."/>
            <person name="Faga B."/>
            <person name="Levy M.J."/>
            <person name="McMahan L."/>
            <person name="Van Buren P."/>
            <person name="Vaughn M.W."/>
            <person name="Ying K."/>
            <person name="Yeh C.-T."/>
            <person name="Emrich S.J."/>
            <person name="Jia Y."/>
            <person name="Kalyanaraman A."/>
            <person name="Hsia A.-P."/>
            <person name="Barbazuk W.B."/>
            <person name="Baucom R.S."/>
            <person name="Brutnell T.P."/>
            <person name="Carpita N.C."/>
            <person name="Chaparro C."/>
            <person name="Chia J.-M."/>
            <person name="Deragon J.-M."/>
            <person name="Estill J.C."/>
            <person name="Fu Y."/>
            <person name="Jeddeloh J.A."/>
            <person name="Han Y."/>
            <person name="Lee H."/>
            <person name="Li P."/>
            <person name="Lisch D.R."/>
            <person name="Liu S."/>
            <person name="Liu Z."/>
            <person name="Nagel D.H."/>
            <person name="McCann M.C."/>
            <person name="SanMiguel P."/>
            <person name="Myers A.M."/>
            <person name="Nettleton D."/>
            <person name="Nguyen J."/>
            <person name="Penning B.W."/>
            <person name="Ponnala L."/>
            <person name="Schneider K.L."/>
            <person name="Schwartz D.C."/>
            <person name="Sharma A."/>
            <person name="Soderlund C."/>
            <person name="Springer N.M."/>
            <person name="Sun Q."/>
            <person name="Wang H."/>
            <person name="Waterman M."/>
            <person name="Westerman R."/>
            <person name="Wolfgruber T.K."/>
            <person name="Yang L."/>
            <person name="Yu Y."/>
            <person name="Zhang L."/>
            <person name="Zhou S."/>
            <person name="Zhu Q."/>
            <person name="Bennetzen J.L."/>
            <person name="Dawe R.K."/>
            <person name="Jiang J."/>
            <person name="Jiang N."/>
            <person name="Presting G.G."/>
            <person name="Wessler S.R."/>
            <person name="Aluru S."/>
            <person name="Martienssen R.A."/>
            <person name="Clifton S.W."/>
            <person name="McCombie W.R."/>
            <person name="Wing R.A."/>
            <person name="Wilson R.K."/>
        </authorList>
    </citation>
    <scope>NUCLEOTIDE SEQUENCE [LARGE SCALE GENOMIC DNA]</scope>
    <source>
        <strain>cv. B73</strain>
    </source>
</reference>
<reference key="2">
    <citation type="journal article" date="2009" name="Plant Mol. Biol.">
        <title>Insights into corn genes derived from large-scale cDNA sequencing.</title>
        <authorList>
            <person name="Alexandrov N.N."/>
            <person name="Brover V.V."/>
            <person name="Freidin S."/>
            <person name="Troukhan M.E."/>
            <person name="Tatarinova T.V."/>
            <person name="Zhang H."/>
            <person name="Swaller T.J."/>
            <person name="Lu Y.-P."/>
            <person name="Bouck J."/>
            <person name="Flavell R.B."/>
            <person name="Feldmann K.A."/>
        </authorList>
    </citation>
    <scope>NUCLEOTIDE SEQUENCE [LARGE SCALE MRNA]</scope>
</reference>
<reference key="3">
    <citation type="journal article" date="2009" name="PLoS Genet.">
        <title>Sequencing, mapping, and analysis of 27,455 maize full-length cDNAs.</title>
        <authorList>
            <person name="Soderlund C."/>
            <person name="Descour A."/>
            <person name="Kudrna D."/>
            <person name="Bomhoff M."/>
            <person name="Boyd L."/>
            <person name="Currie J."/>
            <person name="Angelova A."/>
            <person name="Collura K."/>
            <person name="Wissotski M."/>
            <person name="Ashley E."/>
            <person name="Morrow D."/>
            <person name="Fernandes J."/>
            <person name="Walbot V."/>
            <person name="Yu Y."/>
        </authorList>
    </citation>
    <scope>NUCLEOTIDE SEQUENCE [LARGE SCALE MRNA]</scope>
    <source>
        <strain>cv. B73</strain>
    </source>
</reference>
<reference key="4">
    <citation type="journal article" date="2017" name="Plant Physiol.">
        <title>PSA3, a protein on the stromal face of the thylakoid membrane, promotes photosystem I accumulation in cooperation with the assembly factor PYG7.</title>
        <authorList>
            <person name="Shen J."/>
            <person name="Williams-Carrier R."/>
            <person name="Barkan A."/>
        </authorList>
    </citation>
    <scope>FUNCTION</scope>
    <scope>SUBCELLULAR LOCATION</scope>
    <scope>DISRUPTION PHENOTYPE</scope>
</reference>
<keyword id="KW-0150">Chloroplast</keyword>
<keyword id="KW-0472">Membrane</keyword>
<keyword id="KW-0934">Plastid</keyword>
<keyword id="KW-1185">Reference proteome</keyword>
<keyword id="KW-0793">Thylakoid</keyword>
<keyword id="KW-0809">Transit peptide</keyword>